<proteinExistence type="evidence at protein level"/>
<evidence type="ECO:0000250" key="1"/>
<evidence type="ECO:0000250" key="2">
    <source>
        <dbReference type="UniProtKB" id="P50990"/>
    </source>
</evidence>
<evidence type="ECO:0000255" key="3"/>
<evidence type="ECO:0000256" key="4">
    <source>
        <dbReference type="SAM" id="MobiDB-lite"/>
    </source>
</evidence>
<evidence type="ECO:0000269" key="5">
    <source>
    </source>
</evidence>
<evidence type="ECO:0000305" key="6"/>
<protein>
    <recommendedName>
        <fullName>T-complex protein 1 subunit theta</fullName>
        <shortName>TCP-1-theta</shortName>
    </recommendedName>
    <alternativeName>
        <fullName>CCT-theta</fullName>
    </alternativeName>
</protein>
<organism>
    <name type="scientific">Caenorhabditis elegans</name>
    <dbReference type="NCBI Taxonomy" id="6239"/>
    <lineage>
        <taxon>Eukaryota</taxon>
        <taxon>Metazoa</taxon>
        <taxon>Ecdysozoa</taxon>
        <taxon>Nematoda</taxon>
        <taxon>Chromadorea</taxon>
        <taxon>Rhabditida</taxon>
        <taxon>Rhabditina</taxon>
        <taxon>Rhabditomorpha</taxon>
        <taxon>Rhabditoidea</taxon>
        <taxon>Rhabditidae</taxon>
        <taxon>Peloderinae</taxon>
        <taxon>Caenorhabditis</taxon>
    </lineage>
</organism>
<reference key="1">
    <citation type="journal article" date="1998" name="Science">
        <title>Genome sequence of the nematode C. elegans: a platform for investigating biology.</title>
        <authorList>
            <consortium name="The C. elegans sequencing consortium"/>
        </authorList>
    </citation>
    <scope>NUCLEOTIDE SEQUENCE [LARGE SCALE GENOMIC DNA]</scope>
    <source>
        <strain>Bristol N2</strain>
    </source>
</reference>
<reference evidence="6" key="2">
    <citation type="submission" date="2006-03" db="UniProtKB">
        <authorList>
            <person name="Bienvenut W.V."/>
        </authorList>
    </citation>
    <scope>PROTEIN SEQUENCE OF 62-73; 138-148; 255-266; 372-378 AND 508-518</scope>
    <scope>IDENTIFICATION BY MASS SPECTROMETRY</scope>
</reference>
<reference key="3">
    <citation type="journal article" date="2009" name="Genetics">
        <title>A genomewide RNAi screen for genes that affect the stability, distribution and function of P granules in Caenorhabditis elegans.</title>
        <authorList>
            <person name="Updike D.L."/>
            <person name="Strome S."/>
        </authorList>
    </citation>
    <scope>FUNCTION</scope>
    <scope>DISRUPTION PHENOTYPE</scope>
</reference>
<gene>
    <name type="primary">cct-8</name>
    <name type="ORF">Y55F3AR.3</name>
</gene>
<feature type="chain" id="PRO_0000239934" description="T-complex protein 1 subunit theta">
    <location>
        <begin position="1"/>
        <end position="548"/>
    </location>
</feature>
<feature type="region of interest" description="Disordered" evidence="4">
    <location>
        <begin position="527"/>
        <end position="548"/>
    </location>
</feature>
<accession>Q9N358</accession>
<sequence>MAMKIPKSGYNRFMKEGAQHFKGTDEAVQRNIEACTELASQIRSAYGPNGMNKMVINHIEKLFVTNDAATILKELEIQHPAARIIIMATEMQEKQIGDNTNTVVILAAALLEHAANLIHMGMTPQEVAAGYEQAAEKALEILPTLVVKEATDMKNIEEVRQYIRSAITSKQYDNEDIIADLVAKACVTTCPANSFNFNVDNIRICKIIGSGVHTSTVMNGMVFKRGAEGEIREARDARIAVYTCPFDLTQTETKGTVLIENADELRNFSKGEEAEVEEQVKAIADNGVKVVVAAGKFGDMYLHFLNKYKIMAVRLTSKFDLRRLCRTVGAQPQARICAPAVNLLGHCDSVAVQEIGDENVVVFDKKSETGKVATIIIRGSSQSRIDDVERAVDDAVNTYKALTKDGKLLAGAGAVEIELAKEIESFGAKAPGLEQYAIKKFAHALETLPKAIAENAGMPTTETLTKLYAEHVAGKKNAGIDIWKRETMDAVVNNIFDLYAGKRLAIKLATDAASTILKVDQIIMSKQATGGPKPRGPKAQDEDDDGMA</sequence>
<name>TCPQ_CAEEL</name>
<comment type="function">
    <text evidence="1 5">Molecular chaperone; assists the folding of proteins upon ATP hydrolysis. Known to play a role, in vitro, in the folding of actin and tubulin (By similarity). Required for correct subcellular localization of pgl-1.</text>
</comment>
<comment type="subunit">
    <text evidence="1">Heterooligomeric complex.</text>
</comment>
<comment type="subcellular location">
    <subcellularLocation>
        <location evidence="2">Cytoplasm</location>
    </subcellularLocation>
</comment>
<comment type="disruption phenotype">
    <text evidence="5">Low and diffuse subcellular localization of pgl-1 in embryos rather than confined to granules in somatic cells.</text>
</comment>
<comment type="similarity">
    <text evidence="3">Belongs to the TCP-1 chaperonin family.</text>
</comment>
<keyword id="KW-0067">ATP-binding</keyword>
<keyword id="KW-0143">Chaperone</keyword>
<keyword id="KW-0963">Cytoplasm</keyword>
<keyword id="KW-0903">Direct protein sequencing</keyword>
<keyword id="KW-0547">Nucleotide-binding</keyword>
<keyword id="KW-1185">Reference proteome</keyword>
<dbReference type="EMBL" id="FO080854">
    <property type="protein sequence ID" value="CCD67240.1"/>
    <property type="molecule type" value="Genomic_DNA"/>
</dbReference>
<dbReference type="RefSeq" id="NP_500035.3">
    <property type="nucleotide sequence ID" value="NM_067634.6"/>
</dbReference>
<dbReference type="SMR" id="Q9N358"/>
<dbReference type="BioGRID" id="42086">
    <property type="interactions" value="15"/>
</dbReference>
<dbReference type="FunCoup" id="Q9N358">
    <property type="interactions" value="2667"/>
</dbReference>
<dbReference type="IntAct" id="Q9N358">
    <property type="interactions" value="2"/>
</dbReference>
<dbReference type="STRING" id="6239.Y55F3AR.3a.1"/>
<dbReference type="PaxDb" id="6239-Y55F3AR.3a"/>
<dbReference type="PeptideAtlas" id="Q9N358"/>
<dbReference type="EnsemblMetazoa" id="Y55F3AR.3a.1">
    <property type="protein sequence ID" value="Y55F3AR.3a.1"/>
    <property type="gene ID" value="WBGene00021934"/>
</dbReference>
<dbReference type="GeneID" id="176928"/>
<dbReference type="KEGG" id="cel:CELE_Y55F3AR.3"/>
<dbReference type="AGR" id="WB:WBGene00021934"/>
<dbReference type="CTD" id="176928"/>
<dbReference type="WormBase" id="Y55F3AR.3a">
    <property type="protein sequence ID" value="CE44228"/>
    <property type="gene ID" value="WBGene00021934"/>
    <property type="gene designation" value="cct-8"/>
</dbReference>
<dbReference type="eggNOG" id="KOG0362">
    <property type="taxonomic scope" value="Eukaryota"/>
</dbReference>
<dbReference type="HOGENOM" id="CLU_008891_4_2_1"/>
<dbReference type="InParanoid" id="Q9N358"/>
<dbReference type="OMA" id="WGLKYAV"/>
<dbReference type="OrthoDB" id="1748577at2759"/>
<dbReference type="PhylomeDB" id="Q9N358"/>
<dbReference type="BRENDA" id="3.6.4.B10">
    <property type="organism ID" value="1045"/>
</dbReference>
<dbReference type="Reactome" id="R-CEL-390471">
    <property type="pathway name" value="Association of TriC/CCT with target proteins during biosynthesis"/>
</dbReference>
<dbReference type="Reactome" id="R-CEL-6798695">
    <property type="pathway name" value="Neutrophil degranulation"/>
</dbReference>
<dbReference type="Reactome" id="R-CEL-6814122">
    <property type="pathway name" value="Cooperation of PDCL (PhLP1) and TRiC/CCT in G-protein beta folding"/>
</dbReference>
<dbReference type="PRO" id="PR:Q9N358"/>
<dbReference type="Proteomes" id="UP000001940">
    <property type="component" value="Chromosome IV"/>
</dbReference>
<dbReference type="Bgee" id="WBGene00021934">
    <property type="expression patterns" value="Expressed in adult organism and 4 other cell types or tissues"/>
</dbReference>
<dbReference type="ExpressionAtlas" id="Q9N358">
    <property type="expression patterns" value="baseline and differential"/>
</dbReference>
<dbReference type="GO" id="GO:0005832">
    <property type="term" value="C:chaperonin-containing T-complex"/>
    <property type="evidence" value="ECO:0000318"/>
    <property type="project" value="GO_Central"/>
</dbReference>
<dbReference type="GO" id="GO:0005524">
    <property type="term" value="F:ATP binding"/>
    <property type="evidence" value="ECO:0007669"/>
    <property type="project" value="UniProtKB-KW"/>
</dbReference>
<dbReference type="GO" id="GO:0016887">
    <property type="term" value="F:ATP hydrolysis activity"/>
    <property type="evidence" value="ECO:0007669"/>
    <property type="project" value="InterPro"/>
</dbReference>
<dbReference type="GO" id="GO:0140662">
    <property type="term" value="F:ATP-dependent protein folding chaperone"/>
    <property type="evidence" value="ECO:0007669"/>
    <property type="project" value="InterPro"/>
</dbReference>
<dbReference type="GO" id="GO:0051082">
    <property type="term" value="F:unfolded protein binding"/>
    <property type="evidence" value="ECO:0000318"/>
    <property type="project" value="GO_Central"/>
</dbReference>
<dbReference type="GO" id="GO:0006457">
    <property type="term" value="P:protein folding"/>
    <property type="evidence" value="ECO:0000318"/>
    <property type="project" value="GO_Central"/>
</dbReference>
<dbReference type="CDD" id="cd03341">
    <property type="entry name" value="TCP1_theta"/>
    <property type="match status" value="1"/>
</dbReference>
<dbReference type="FunFam" id="3.50.7.10:FF:000008">
    <property type="entry name" value="T-complex protein 1 subunit theta"/>
    <property type="match status" value="1"/>
</dbReference>
<dbReference type="Gene3D" id="3.50.7.10">
    <property type="entry name" value="GroEL"/>
    <property type="match status" value="1"/>
</dbReference>
<dbReference type="Gene3D" id="1.10.560.10">
    <property type="entry name" value="GroEL-like equatorial domain"/>
    <property type="match status" value="1"/>
</dbReference>
<dbReference type="Gene3D" id="3.30.260.10">
    <property type="entry name" value="TCP-1-like chaperonin intermediate domain"/>
    <property type="match status" value="1"/>
</dbReference>
<dbReference type="InterPro" id="IPR012721">
    <property type="entry name" value="Chap_CCT_theta"/>
</dbReference>
<dbReference type="InterPro" id="IPR017998">
    <property type="entry name" value="Chaperone_TCP-1"/>
</dbReference>
<dbReference type="InterPro" id="IPR002194">
    <property type="entry name" value="Chaperonin_TCP-1_CS"/>
</dbReference>
<dbReference type="InterPro" id="IPR002423">
    <property type="entry name" value="Cpn60/GroEL/TCP-1"/>
</dbReference>
<dbReference type="InterPro" id="IPR027409">
    <property type="entry name" value="GroEL-like_apical_dom_sf"/>
</dbReference>
<dbReference type="InterPro" id="IPR027413">
    <property type="entry name" value="GROEL-like_equatorial_sf"/>
</dbReference>
<dbReference type="InterPro" id="IPR027410">
    <property type="entry name" value="TCP-1-like_intermed_sf"/>
</dbReference>
<dbReference type="NCBIfam" id="TIGR02346">
    <property type="entry name" value="chap_CCT_theta"/>
    <property type="match status" value="1"/>
</dbReference>
<dbReference type="PANTHER" id="PTHR11353">
    <property type="entry name" value="CHAPERONIN"/>
    <property type="match status" value="1"/>
</dbReference>
<dbReference type="Pfam" id="PF00118">
    <property type="entry name" value="Cpn60_TCP1"/>
    <property type="match status" value="1"/>
</dbReference>
<dbReference type="PRINTS" id="PR00304">
    <property type="entry name" value="TCOMPLEXTCP1"/>
</dbReference>
<dbReference type="SUPFAM" id="SSF52029">
    <property type="entry name" value="GroEL apical domain-like"/>
    <property type="match status" value="1"/>
</dbReference>
<dbReference type="SUPFAM" id="SSF48592">
    <property type="entry name" value="GroEL equatorial domain-like"/>
    <property type="match status" value="1"/>
</dbReference>
<dbReference type="SUPFAM" id="SSF54849">
    <property type="entry name" value="GroEL-intermediate domain like"/>
    <property type="match status" value="1"/>
</dbReference>
<dbReference type="PROSITE" id="PS00750">
    <property type="entry name" value="TCP1_1"/>
    <property type="match status" value="1"/>
</dbReference>
<dbReference type="PROSITE" id="PS00751">
    <property type="entry name" value="TCP1_2"/>
    <property type="match status" value="1"/>
</dbReference>